<proteinExistence type="inferred from homology"/>
<dbReference type="EMBL" id="AE014299">
    <property type="protein sequence ID" value="AAN54196.1"/>
    <property type="molecule type" value="Genomic_DNA"/>
</dbReference>
<dbReference type="RefSeq" id="NP_716751.1">
    <property type="nucleotide sequence ID" value="NC_004347.2"/>
</dbReference>
<dbReference type="RefSeq" id="WP_011071367.1">
    <property type="nucleotide sequence ID" value="NC_004347.2"/>
</dbReference>
<dbReference type="SMR" id="Q8EHT7"/>
<dbReference type="STRING" id="211586.SO_1126"/>
<dbReference type="PaxDb" id="211586-SO_1126"/>
<dbReference type="KEGG" id="son:SO_1126"/>
<dbReference type="PATRIC" id="fig|211586.12.peg.1079"/>
<dbReference type="eggNOG" id="COG0443">
    <property type="taxonomic scope" value="Bacteria"/>
</dbReference>
<dbReference type="HOGENOM" id="CLU_005965_2_1_6"/>
<dbReference type="OrthoDB" id="9766019at2"/>
<dbReference type="PhylomeDB" id="Q8EHT7"/>
<dbReference type="BioCyc" id="SONE211586:G1GMP-1036-MONOMER"/>
<dbReference type="Proteomes" id="UP000008186">
    <property type="component" value="Chromosome"/>
</dbReference>
<dbReference type="GO" id="GO:0005829">
    <property type="term" value="C:cytosol"/>
    <property type="evidence" value="ECO:0000318"/>
    <property type="project" value="GO_Central"/>
</dbReference>
<dbReference type="GO" id="GO:0005524">
    <property type="term" value="F:ATP binding"/>
    <property type="evidence" value="ECO:0007669"/>
    <property type="project" value="UniProtKB-UniRule"/>
</dbReference>
<dbReference type="GO" id="GO:0016887">
    <property type="term" value="F:ATP hydrolysis activity"/>
    <property type="evidence" value="ECO:0000318"/>
    <property type="project" value="GO_Central"/>
</dbReference>
<dbReference type="GO" id="GO:0140662">
    <property type="term" value="F:ATP-dependent protein folding chaperone"/>
    <property type="evidence" value="ECO:0007669"/>
    <property type="project" value="InterPro"/>
</dbReference>
<dbReference type="GO" id="GO:0031072">
    <property type="term" value="F:heat shock protein binding"/>
    <property type="evidence" value="ECO:0000318"/>
    <property type="project" value="GO_Central"/>
</dbReference>
<dbReference type="GO" id="GO:0044183">
    <property type="term" value="F:protein folding chaperone"/>
    <property type="evidence" value="ECO:0000318"/>
    <property type="project" value="GO_Central"/>
</dbReference>
<dbReference type="GO" id="GO:0051082">
    <property type="term" value="F:unfolded protein binding"/>
    <property type="evidence" value="ECO:0007669"/>
    <property type="project" value="InterPro"/>
</dbReference>
<dbReference type="GO" id="GO:0051085">
    <property type="term" value="P:chaperone cofactor-dependent protein refolding"/>
    <property type="evidence" value="ECO:0000318"/>
    <property type="project" value="GO_Central"/>
</dbReference>
<dbReference type="GO" id="GO:0042026">
    <property type="term" value="P:protein refolding"/>
    <property type="evidence" value="ECO:0000318"/>
    <property type="project" value="GO_Central"/>
</dbReference>
<dbReference type="CDD" id="cd10234">
    <property type="entry name" value="ASKHA_NBD_HSP70_DnaK-like"/>
    <property type="match status" value="1"/>
</dbReference>
<dbReference type="FunFam" id="2.60.34.10:FF:000014">
    <property type="entry name" value="Chaperone protein DnaK HSP70"/>
    <property type="match status" value="1"/>
</dbReference>
<dbReference type="FunFam" id="1.20.1270.10:FF:000001">
    <property type="entry name" value="Molecular chaperone DnaK"/>
    <property type="match status" value="1"/>
</dbReference>
<dbReference type="FunFam" id="3.30.420.40:FF:000004">
    <property type="entry name" value="Molecular chaperone DnaK"/>
    <property type="match status" value="1"/>
</dbReference>
<dbReference type="FunFam" id="3.90.640.10:FF:000003">
    <property type="entry name" value="Molecular chaperone DnaK"/>
    <property type="match status" value="1"/>
</dbReference>
<dbReference type="Gene3D" id="1.20.1270.10">
    <property type="match status" value="1"/>
</dbReference>
<dbReference type="Gene3D" id="3.30.420.40">
    <property type="match status" value="2"/>
</dbReference>
<dbReference type="Gene3D" id="3.90.640.10">
    <property type="entry name" value="Actin, Chain A, domain 4"/>
    <property type="match status" value="1"/>
</dbReference>
<dbReference type="Gene3D" id="2.60.34.10">
    <property type="entry name" value="Substrate Binding Domain Of DNAk, Chain A, domain 1"/>
    <property type="match status" value="1"/>
</dbReference>
<dbReference type="HAMAP" id="MF_00332">
    <property type="entry name" value="DnaK"/>
    <property type="match status" value="1"/>
</dbReference>
<dbReference type="InterPro" id="IPR043129">
    <property type="entry name" value="ATPase_NBD"/>
</dbReference>
<dbReference type="InterPro" id="IPR012725">
    <property type="entry name" value="Chaperone_DnaK"/>
</dbReference>
<dbReference type="InterPro" id="IPR018181">
    <property type="entry name" value="Heat_shock_70_CS"/>
</dbReference>
<dbReference type="InterPro" id="IPR029048">
    <property type="entry name" value="HSP70_C_sf"/>
</dbReference>
<dbReference type="InterPro" id="IPR029047">
    <property type="entry name" value="HSP70_peptide-bd_sf"/>
</dbReference>
<dbReference type="InterPro" id="IPR013126">
    <property type="entry name" value="Hsp_70_fam"/>
</dbReference>
<dbReference type="NCBIfam" id="NF001413">
    <property type="entry name" value="PRK00290.1"/>
    <property type="match status" value="1"/>
</dbReference>
<dbReference type="NCBIfam" id="NF003520">
    <property type="entry name" value="PRK05183.1"/>
    <property type="match status" value="1"/>
</dbReference>
<dbReference type="NCBIfam" id="TIGR02350">
    <property type="entry name" value="prok_dnaK"/>
    <property type="match status" value="1"/>
</dbReference>
<dbReference type="PANTHER" id="PTHR19375">
    <property type="entry name" value="HEAT SHOCK PROTEIN 70KDA"/>
    <property type="match status" value="1"/>
</dbReference>
<dbReference type="Pfam" id="PF00012">
    <property type="entry name" value="HSP70"/>
    <property type="match status" value="1"/>
</dbReference>
<dbReference type="PRINTS" id="PR00301">
    <property type="entry name" value="HEATSHOCK70"/>
</dbReference>
<dbReference type="SUPFAM" id="SSF53067">
    <property type="entry name" value="Actin-like ATPase domain"/>
    <property type="match status" value="2"/>
</dbReference>
<dbReference type="SUPFAM" id="SSF100920">
    <property type="entry name" value="Heat shock protein 70kD (HSP70), peptide-binding domain"/>
    <property type="match status" value="1"/>
</dbReference>
<dbReference type="PROSITE" id="PS00297">
    <property type="entry name" value="HSP70_1"/>
    <property type="match status" value="1"/>
</dbReference>
<dbReference type="PROSITE" id="PS00329">
    <property type="entry name" value="HSP70_2"/>
    <property type="match status" value="1"/>
</dbReference>
<dbReference type="PROSITE" id="PS01036">
    <property type="entry name" value="HSP70_3"/>
    <property type="match status" value="1"/>
</dbReference>
<evidence type="ECO:0000255" key="1">
    <source>
        <dbReference type="HAMAP-Rule" id="MF_00332"/>
    </source>
</evidence>
<evidence type="ECO:0000256" key="2">
    <source>
        <dbReference type="SAM" id="MobiDB-lite"/>
    </source>
</evidence>
<organism>
    <name type="scientific">Shewanella oneidensis (strain ATCC 700550 / JCM 31522 / CIP 106686 / LMG 19005 / NCIMB 14063 / MR-1)</name>
    <dbReference type="NCBI Taxonomy" id="211586"/>
    <lineage>
        <taxon>Bacteria</taxon>
        <taxon>Pseudomonadati</taxon>
        <taxon>Pseudomonadota</taxon>
        <taxon>Gammaproteobacteria</taxon>
        <taxon>Alteromonadales</taxon>
        <taxon>Shewanellaceae</taxon>
        <taxon>Shewanella</taxon>
    </lineage>
</organism>
<keyword id="KW-0067">ATP-binding</keyword>
<keyword id="KW-0143">Chaperone</keyword>
<keyword id="KW-0547">Nucleotide-binding</keyword>
<keyword id="KW-0597">Phosphoprotein</keyword>
<keyword id="KW-1185">Reference proteome</keyword>
<keyword id="KW-0346">Stress response</keyword>
<name>DNAK_SHEON</name>
<accession>Q8EHT7</accession>
<comment type="function">
    <text evidence="1">Acts as a chaperone.</text>
</comment>
<comment type="induction">
    <text evidence="1">By stress conditions e.g. heat shock.</text>
</comment>
<comment type="similarity">
    <text evidence="1">Belongs to the heat shock protein 70 family.</text>
</comment>
<gene>
    <name evidence="1" type="primary">dnaK</name>
    <name type="ordered locus">SO_1126</name>
</gene>
<sequence length="639" mass="68862">MGKIIGIDLGTTNSCVAVLDGGKARVLENAEGDRTTPSIIAYTDDETIVGQPAKRQAVTNPNNTFFAIKRLIGRRFKDDEVQRDVNIMPFKIIAADNGDAWVESRGNKMAPPQVSAEILKKMKKTAEDFLGEEVTEAVITVPAYFNDSQRQATKDAGRIAGLEVKRIINEPTAAALAYGIDKKQGDNIVAVYDLGGGTFDISIIEIDSNDGDQTFEVLATNGDTHLGGEDFDNRLINYLADEFKKEQGLDLRKDPLAMQRLKEAAEKAKIELSSTNQTEVNLPYITADATGPKHLVVKITRAKLESLVEDLIIRTLEPLKVALADADLSVSDINEVILVGGQTRMPKVQEAVTNFFGKEPRKDVNPDEAVAVGAAIQAGVLSGDVKDVLLLDVTPLSLGIETMGSVMTKLIEKNTTIPTKAQQVFSTADDNQSAVTIHVLQGERKQASANKSLGQFNLDGIEPAPRGMPQIEVMFDIDADGILHVSATDKKTGKKQNITIKASSGLSEEEVAQMVRDAEAHAEEDKKFEELVQSRNQADGLVHATKKQVEEAGDALPSEDKAKIEAAMSAVETAVKGNDKEAIEKATQALIEASAKLMEIAQAKAQTQGGAQEGAAKQSNATADDVVDAEFEEVKDDKK</sequence>
<protein>
    <recommendedName>
        <fullName evidence="1">Chaperone protein DnaK</fullName>
    </recommendedName>
    <alternativeName>
        <fullName evidence="1">HSP70</fullName>
    </alternativeName>
    <alternativeName>
        <fullName evidence="1">Heat shock 70 kDa protein</fullName>
    </alternativeName>
    <alternativeName>
        <fullName evidence="1">Heat shock protein 70</fullName>
    </alternativeName>
</protein>
<reference key="1">
    <citation type="journal article" date="2002" name="Nat. Biotechnol.">
        <title>Genome sequence of the dissimilatory metal ion-reducing bacterium Shewanella oneidensis.</title>
        <authorList>
            <person name="Heidelberg J.F."/>
            <person name="Paulsen I.T."/>
            <person name="Nelson K.E."/>
            <person name="Gaidos E.J."/>
            <person name="Nelson W.C."/>
            <person name="Read T.D."/>
            <person name="Eisen J.A."/>
            <person name="Seshadri R."/>
            <person name="Ward N.L."/>
            <person name="Methe B.A."/>
            <person name="Clayton R.A."/>
            <person name="Meyer T."/>
            <person name="Tsapin A."/>
            <person name="Scott J."/>
            <person name="Beanan M.J."/>
            <person name="Brinkac L.M."/>
            <person name="Daugherty S.C."/>
            <person name="DeBoy R.T."/>
            <person name="Dodson R.J."/>
            <person name="Durkin A.S."/>
            <person name="Haft D.H."/>
            <person name="Kolonay J.F."/>
            <person name="Madupu R."/>
            <person name="Peterson J.D."/>
            <person name="Umayam L.A."/>
            <person name="White O."/>
            <person name="Wolf A.M."/>
            <person name="Vamathevan J.J."/>
            <person name="Weidman J.F."/>
            <person name="Impraim M."/>
            <person name="Lee K."/>
            <person name="Berry K.J."/>
            <person name="Lee C."/>
            <person name="Mueller J."/>
            <person name="Khouri H.M."/>
            <person name="Gill J."/>
            <person name="Utterback T.R."/>
            <person name="McDonald L.A."/>
            <person name="Feldblyum T.V."/>
            <person name="Smith H.O."/>
            <person name="Venter J.C."/>
            <person name="Nealson K.H."/>
            <person name="Fraser C.M."/>
        </authorList>
    </citation>
    <scope>NUCLEOTIDE SEQUENCE [LARGE SCALE GENOMIC DNA]</scope>
    <source>
        <strain>ATCC 700550 / JCM 31522 / CIP 106686 / LMG 19005 / NCIMB 14063 / MR-1</strain>
    </source>
</reference>
<feature type="chain" id="PRO_0000078534" description="Chaperone protein DnaK">
    <location>
        <begin position="1"/>
        <end position="639"/>
    </location>
</feature>
<feature type="region of interest" description="Disordered" evidence="2">
    <location>
        <begin position="603"/>
        <end position="639"/>
    </location>
</feature>
<feature type="compositionally biased region" description="Low complexity" evidence="2">
    <location>
        <begin position="603"/>
        <end position="618"/>
    </location>
</feature>
<feature type="compositionally biased region" description="Acidic residues" evidence="2">
    <location>
        <begin position="625"/>
        <end position="639"/>
    </location>
</feature>
<feature type="modified residue" description="Phosphothreonine; by autocatalysis" evidence="1">
    <location>
        <position position="198"/>
    </location>
</feature>